<sequence>MTALPAASITSSAFDDLDALNAQLEGLRADQRVAWALQHGPQNAALSSSFGAQSAVTLHLLSQQRPDIPVILIDTGYLFPETYRFADALTERLKLNLKVYRPLVSRAWMEARHGRLWEQGMVGIDQYNNLRKVEPMRRALNELDVGTWFTGLRRSQSGGRAQTPIMQKRGERYKISPIADWTDRDVWQYLQAHDLPYHPLWEQGYVSIGDFHTTRRWEPGMREEDTRFYGLKRECGIHEDI</sequence>
<proteinExistence type="inferred from homology"/>
<keyword id="KW-0963">Cytoplasm</keyword>
<keyword id="KW-0560">Oxidoreductase</keyword>
<comment type="function">
    <text evidence="1">Catalyzes the formation of sulfite from phosphoadenosine 5'-phosphosulfate (PAPS) using thioredoxin as an electron donor.</text>
</comment>
<comment type="catalytic activity">
    <reaction evidence="1">
        <text>[thioredoxin]-disulfide + sulfite + adenosine 3',5'-bisphosphate + 2 H(+) = [thioredoxin]-dithiol + 3'-phosphoadenylyl sulfate</text>
        <dbReference type="Rhea" id="RHEA:11724"/>
        <dbReference type="Rhea" id="RHEA-COMP:10698"/>
        <dbReference type="Rhea" id="RHEA-COMP:10700"/>
        <dbReference type="ChEBI" id="CHEBI:15378"/>
        <dbReference type="ChEBI" id="CHEBI:17359"/>
        <dbReference type="ChEBI" id="CHEBI:29950"/>
        <dbReference type="ChEBI" id="CHEBI:50058"/>
        <dbReference type="ChEBI" id="CHEBI:58339"/>
        <dbReference type="ChEBI" id="CHEBI:58343"/>
        <dbReference type="EC" id="1.8.4.8"/>
    </reaction>
</comment>
<comment type="pathway">
    <text evidence="1">Sulfur metabolism; hydrogen sulfide biosynthesis; sulfite from sulfate: step 3/3.</text>
</comment>
<comment type="subcellular location">
    <subcellularLocation>
        <location evidence="1">Cytoplasm</location>
    </subcellularLocation>
</comment>
<comment type="similarity">
    <text evidence="1">Belongs to the PAPS reductase family. CysH subfamily.</text>
</comment>
<dbReference type="EC" id="1.8.4.8" evidence="1"/>
<dbReference type="EMBL" id="AE008923">
    <property type="protein sequence ID" value="AAM38175.1"/>
    <property type="molecule type" value="Genomic_DNA"/>
</dbReference>
<dbReference type="RefSeq" id="WP_011052201.1">
    <property type="nucleotide sequence ID" value="NC_003919.1"/>
</dbReference>
<dbReference type="SMR" id="Q8PHC7"/>
<dbReference type="KEGG" id="xac:XAC3332"/>
<dbReference type="eggNOG" id="COG0175">
    <property type="taxonomic scope" value="Bacteria"/>
</dbReference>
<dbReference type="HOGENOM" id="CLU_044089_3_0_6"/>
<dbReference type="UniPathway" id="UPA00140">
    <property type="reaction ID" value="UER00206"/>
</dbReference>
<dbReference type="Proteomes" id="UP000000576">
    <property type="component" value="Chromosome"/>
</dbReference>
<dbReference type="GO" id="GO:0005737">
    <property type="term" value="C:cytoplasm"/>
    <property type="evidence" value="ECO:0007669"/>
    <property type="project" value="UniProtKB-SubCell"/>
</dbReference>
<dbReference type="GO" id="GO:0004604">
    <property type="term" value="F:phosphoadenylyl-sulfate reductase (thioredoxin) activity"/>
    <property type="evidence" value="ECO:0007669"/>
    <property type="project" value="UniProtKB-UniRule"/>
</dbReference>
<dbReference type="GO" id="GO:0070814">
    <property type="term" value="P:hydrogen sulfide biosynthetic process"/>
    <property type="evidence" value="ECO:0007669"/>
    <property type="project" value="UniProtKB-UniRule"/>
</dbReference>
<dbReference type="GO" id="GO:0019379">
    <property type="term" value="P:sulfate assimilation, phosphoadenylyl sulfate reduction by phosphoadenylyl-sulfate reductase (thioredoxin)"/>
    <property type="evidence" value="ECO:0007669"/>
    <property type="project" value="UniProtKB-UniRule"/>
</dbReference>
<dbReference type="CDD" id="cd23945">
    <property type="entry name" value="PAPS_reductase"/>
    <property type="match status" value="1"/>
</dbReference>
<dbReference type="FunFam" id="3.40.50.620:FF:000043">
    <property type="entry name" value="Phosphoadenosine phosphosulfate reductase"/>
    <property type="match status" value="1"/>
</dbReference>
<dbReference type="Gene3D" id="3.40.50.620">
    <property type="entry name" value="HUPs"/>
    <property type="match status" value="1"/>
</dbReference>
<dbReference type="HAMAP" id="MF_00063">
    <property type="entry name" value="CysH"/>
    <property type="match status" value="1"/>
</dbReference>
<dbReference type="InterPro" id="IPR004511">
    <property type="entry name" value="PAPS/APS_Rdtase"/>
</dbReference>
<dbReference type="InterPro" id="IPR002500">
    <property type="entry name" value="PAPS_reduct_dom"/>
</dbReference>
<dbReference type="InterPro" id="IPR011800">
    <property type="entry name" value="PAPS_reductase_CysH"/>
</dbReference>
<dbReference type="InterPro" id="IPR014729">
    <property type="entry name" value="Rossmann-like_a/b/a_fold"/>
</dbReference>
<dbReference type="NCBIfam" id="TIGR00434">
    <property type="entry name" value="cysH"/>
    <property type="match status" value="1"/>
</dbReference>
<dbReference type="NCBIfam" id="TIGR02057">
    <property type="entry name" value="PAPS_reductase"/>
    <property type="match status" value="1"/>
</dbReference>
<dbReference type="NCBIfam" id="NF002537">
    <property type="entry name" value="PRK02090.1"/>
    <property type="match status" value="1"/>
</dbReference>
<dbReference type="PANTHER" id="PTHR46509">
    <property type="entry name" value="PHOSPHOADENOSINE PHOSPHOSULFATE REDUCTASE"/>
    <property type="match status" value="1"/>
</dbReference>
<dbReference type="PANTHER" id="PTHR46509:SF1">
    <property type="entry name" value="PHOSPHOADENOSINE PHOSPHOSULFATE REDUCTASE"/>
    <property type="match status" value="1"/>
</dbReference>
<dbReference type="Pfam" id="PF01507">
    <property type="entry name" value="PAPS_reduct"/>
    <property type="match status" value="1"/>
</dbReference>
<dbReference type="PIRSF" id="PIRSF000857">
    <property type="entry name" value="PAPS_reductase"/>
    <property type="match status" value="1"/>
</dbReference>
<dbReference type="SUPFAM" id="SSF52402">
    <property type="entry name" value="Adenine nucleotide alpha hydrolases-like"/>
    <property type="match status" value="1"/>
</dbReference>
<gene>
    <name evidence="1" type="primary">cysH</name>
    <name type="ordered locus">XAC3332</name>
</gene>
<evidence type="ECO:0000255" key="1">
    <source>
        <dbReference type="HAMAP-Rule" id="MF_00063"/>
    </source>
</evidence>
<protein>
    <recommendedName>
        <fullName evidence="1">Phosphoadenosine 5'-phosphosulfate reductase</fullName>
        <shortName evidence="1">PAPS reductase</shortName>
        <ecNumber evidence="1">1.8.4.8</ecNumber>
    </recommendedName>
    <alternativeName>
        <fullName evidence="1">3'-phosphoadenylylsulfate reductase</fullName>
    </alternativeName>
    <alternativeName>
        <fullName evidence="1">PAPS reductase, thioredoxin dependent</fullName>
    </alternativeName>
    <alternativeName>
        <fullName evidence="1">PAPS sulfotransferase</fullName>
    </alternativeName>
    <alternativeName>
        <fullName evidence="1">PAdoPS reductase</fullName>
    </alternativeName>
</protein>
<accession>Q8PHC7</accession>
<organism>
    <name type="scientific">Xanthomonas axonopodis pv. citri (strain 306)</name>
    <dbReference type="NCBI Taxonomy" id="190486"/>
    <lineage>
        <taxon>Bacteria</taxon>
        <taxon>Pseudomonadati</taxon>
        <taxon>Pseudomonadota</taxon>
        <taxon>Gammaproteobacteria</taxon>
        <taxon>Lysobacterales</taxon>
        <taxon>Lysobacteraceae</taxon>
        <taxon>Xanthomonas</taxon>
    </lineage>
</organism>
<reference key="1">
    <citation type="journal article" date="2002" name="Nature">
        <title>Comparison of the genomes of two Xanthomonas pathogens with differing host specificities.</title>
        <authorList>
            <person name="da Silva A.C.R."/>
            <person name="Ferro J.A."/>
            <person name="Reinach F.C."/>
            <person name="Farah C.S."/>
            <person name="Furlan L.R."/>
            <person name="Quaggio R.B."/>
            <person name="Monteiro-Vitorello C.B."/>
            <person name="Van Sluys M.A."/>
            <person name="Almeida N.F. Jr."/>
            <person name="Alves L.M.C."/>
            <person name="do Amaral A.M."/>
            <person name="Bertolini M.C."/>
            <person name="Camargo L.E.A."/>
            <person name="Camarotte G."/>
            <person name="Cannavan F."/>
            <person name="Cardozo J."/>
            <person name="Chambergo F."/>
            <person name="Ciapina L.P."/>
            <person name="Cicarelli R.M.B."/>
            <person name="Coutinho L.L."/>
            <person name="Cursino-Santos J.R."/>
            <person name="El-Dorry H."/>
            <person name="Faria J.B."/>
            <person name="Ferreira A.J.S."/>
            <person name="Ferreira R.C.C."/>
            <person name="Ferro M.I.T."/>
            <person name="Formighieri E.F."/>
            <person name="Franco M.C."/>
            <person name="Greggio C.C."/>
            <person name="Gruber A."/>
            <person name="Katsuyama A.M."/>
            <person name="Kishi L.T."/>
            <person name="Leite R.P."/>
            <person name="Lemos E.G.M."/>
            <person name="Lemos M.V.F."/>
            <person name="Locali E.C."/>
            <person name="Machado M.A."/>
            <person name="Madeira A.M.B.N."/>
            <person name="Martinez-Rossi N.M."/>
            <person name="Martins E.C."/>
            <person name="Meidanis J."/>
            <person name="Menck C.F.M."/>
            <person name="Miyaki C.Y."/>
            <person name="Moon D.H."/>
            <person name="Moreira L.M."/>
            <person name="Novo M.T.M."/>
            <person name="Okura V.K."/>
            <person name="Oliveira M.C."/>
            <person name="Oliveira V.R."/>
            <person name="Pereira H.A."/>
            <person name="Rossi A."/>
            <person name="Sena J.A.D."/>
            <person name="Silva C."/>
            <person name="de Souza R.F."/>
            <person name="Spinola L.A.F."/>
            <person name="Takita M.A."/>
            <person name="Tamura R.E."/>
            <person name="Teixeira E.C."/>
            <person name="Tezza R.I.D."/>
            <person name="Trindade dos Santos M."/>
            <person name="Truffi D."/>
            <person name="Tsai S.M."/>
            <person name="White F.F."/>
            <person name="Setubal J.C."/>
            <person name="Kitajima J.P."/>
        </authorList>
    </citation>
    <scope>NUCLEOTIDE SEQUENCE [LARGE SCALE GENOMIC DNA]</scope>
    <source>
        <strain>306</strain>
    </source>
</reference>
<name>CYSH_XANAC</name>
<feature type="chain" id="PRO_0000100656" description="Phosphoadenosine 5'-phosphosulfate reductase">
    <location>
        <begin position="1"/>
        <end position="241"/>
    </location>
</feature>
<feature type="active site" description="Nucleophile; cysteine thiosulfonate intermediate" evidence="1">
    <location>
        <position position="235"/>
    </location>
</feature>